<sequence length="29" mass="3170">MDIVSIAWAALMVVFTFSLSLVVWGRSGL</sequence>
<evidence type="ECO:0000255" key="1">
    <source>
        <dbReference type="HAMAP-Rule" id="MF_00395"/>
    </source>
</evidence>
<dbReference type="EMBL" id="AP009339">
    <property type="protein sequence ID" value="BAF64926.1"/>
    <property type="molecule type" value="Genomic_DNA"/>
</dbReference>
<dbReference type="RefSeq" id="YP_001312185.1">
    <property type="nucleotide sequence ID" value="NC_009618.1"/>
</dbReference>
<dbReference type="SMR" id="A6H5G0"/>
<dbReference type="GeneID" id="5309481"/>
<dbReference type="GO" id="GO:0009535">
    <property type="term" value="C:chloroplast thylakoid membrane"/>
    <property type="evidence" value="ECO:0007669"/>
    <property type="project" value="UniProtKB-SubCell"/>
</dbReference>
<dbReference type="GO" id="GO:0009512">
    <property type="term" value="C:cytochrome b6f complex"/>
    <property type="evidence" value="ECO:0007669"/>
    <property type="project" value="InterPro"/>
</dbReference>
<dbReference type="GO" id="GO:0045158">
    <property type="term" value="F:electron transporter, transferring electrons within cytochrome b6/f complex of photosystem II activity"/>
    <property type="evidence" value="ECO:0007669"/>
    <property type="project" value="InterPro"/>
</dbReference>
<dbReference type="GO" id="GO:0017004">
    <property type="term" value="P:cytochrome complex assembly"/>
    <property type="evidence" value="ECO:0007669"/>
    <property type="project" value="UniProtKB-UniRule"/>
</dbReference>
<dbReference type="GO" id="GO:0015979">
    <property type="term" value="P:photosynthesis"/>
    <property type="evidence" value="ECO:0007669"/>
    <property type="project" value="UniProtKB-KW"/>
</dbReference>
<dbReference type="HAMAP" id="MF_00395">
    <property type="entry name" value="Cytb6_f_PetN"/>
    <property type="match status" value="1"/>
</dbReference>
<dbReference type="InterPro" id="IPR036143">
    <property type="entry name" value="Cytochr_b6-f_cplx_su8_sf"/>
</dbReference>
<dbReference type="InterPro" id="IPR005497">
    <property type="entry name" value="Cytochrome_b6-f_cplx_su8"/>
</dbReference>
<dbReference type="Pfam" id="PF03742">
    <property type="entry name" value="PetN"/>
    <property type="match status" value="1"/>
</dbReference>
<dbReference type="SUPFAM" id="SSF103451">
    <property type="entry name" value="PetN subunit of the cytochrome b6f complex"/>
    <property type="match status" value="1"/>
</dbReference>
<feature type="chain" id="PRO_0000355436" description="Cytochrome b6-f complex subunit 8">
    <location>
        <begin position="1"/>
        <end position="29"/>
    </location>
</feature>
<feature type="transmembrane region" description="Helical" evidence="1">
    <location>
        <begin position="3"/>
        <end position="23"/>
    </location>
</feature>
<name>PETN_CYCTA</name>
<gene>
    <name evidence="1" type="primary">petN</name>
</gene>
<comment type="function">
    <text evidence="1">Component of the cytochrome b6-f complex, which mediates electron transfer between photosystem II (PSII) and photosystem I (PSI), cyclic electron flow around PSI, and state transitions.</text>
</comment>
<comment type="subunit">
    <text evidence="1">The 4 large subunits of the cytochrome b6-f complex are cytochrome b6, subunit IV (17 kDa polypeptide, PetD), cytochrome f and the Rieske protein, while the 4 small subunits are PetG, PetL, PetM and PetN. The complex functions as a dimer.</text>
</comment>
<comment type="subcellular location">
    <subcellularLocation>
        <location evidence="1">Plastid</location>
        <location evidence="1">Chloroplast thylakoid membrane</location>
        <topology evidence="1">Single-pass membrane protein</topology>
    </subcellularLocation>
</comment>
<comment type="similarity">
    <text evidence="1">Belongs to the PetN family.</text>
</comment>
<organism>
    <name type="scientific">Cycas taitungensis</name>
    <name type="common">Prince sago</name>
    <name type="synonym">Cycas taiwaniana</name>
    <dbReference type="NCBI Taxonomy" id="54799"/>
    <lineage>
        <taxon>Eukaryota</taxon>
        <taxon>Viridiplantae</taxon>
        <taxon>Streptophyta</taxon>
        <taxon>Embryophyta</taxon>
        <taxon>Tracheophyta</taxon>
        <taxon>Spermatophyta</taxon>
        <taxon>Cycadidae</taxon>
        <taxon>Cycadales</taxon>
        <taxon>Cycadaceae</taxon>
        <taxon>Cycas</taxon>
    </lineage>
</organism>
<keyword id="KW-0150">Chloroplast</keyword>
<keyword id="KW-0249">Electron transport</keyword>
<keyword id="KW-0472">Membrane</keyword>
<keyword id="KW-0602">Photosynthesis</keyword>
<keyword id="KW-0934">Plastid</keyword>
<keyword id="KW-0793">Thylakoid</keyword>
<keyword id="KW-0812">Transmembrane</keyword>
<keyword id="KW-1133">Transmembrane helix</keyword>
<keyword id="KW-0813">Transport</keyword>
<reference key="1">
    <citation type="journal article" date="2007" name="Mol. Biol. Evol.">
        <title>Chloroplast genome (cpDNA) of Cycas taitungensis and 56 cp protein-coding genes of Gnetum parvifolium: insights into cpDNA evolution and phylogeny of extant seed plants.</title>
        <authorList>
            <person name="Wu C.-S."/>
            <person name="Wang Y.-N."/>
            <person name="Liu S.-M."/>
            <person name="Chaw S.-M."/>
        </authorList>
    </citation>
    <scope>NUCLEOTIDE SEQUENCE [LARGE SCALE GENOMIC DNA]</scope>
</reference>
<accession>A6H5G0</accession>
<geneLocation type="chloroplast"/>
<protein>
    <recommendedName>
        <fullName evidence="1">Cytochrome b6-f complex subunit 8</fullName>
    </recommendedName>
    <alternativeName>
        <fullName evidence="1">Cytochrome b6-f complex subunit PetN</fullName>
    </alternativeName>
    <alternativeName>
        <fullName evidence="1">Cytochrome b6-f complex subunit VIII</fullName>
    </alternativeName>
</protein>
<proteinExistence type="inferred from homology"/>